<reference key="1">
    <citation type="journal article" date="1992" name="J. Bacteriol.">
        <title>A novel protein, LcrQ, involved in the low-calcium response of Yersinia pseudotuberculosis shows extensive homology to YopH.</title>
        <authorList>
            <person name="Rimpilaeinen M."/>
            <person name="Forsberg A."/>
            <person name="Wolf-Watz H."/>
        </authorList>
    </citation>
    <scope>NUCLEOTIDE SEQUENCE [GENOMIC DNA]</scope>
    <source>
        <strain>YPIII / Serotype O:3</strain>
        <plasmid>pIB1</plasmid>
    </source>
</reference>
<reference key="2">
    <citation type="journal article" date="2004" name="Proc. Natl. Acad. Sci. U.S.A.">
        <title>Insights into the evolution of Yersinia pestis through whole-genome comparison with Yersinia pseudotuberculosis.</title>
        <authorList>
            <person name="Chain P.S.G."/>
            <person name="Carniel E."/>
            <person name="Larimer F.W."/>
            <person name="Lamerdin J."/>
            <person name="Stoutland P.O."/>
            <person name="Regala W.M."/>
            <person name="Georgescu A.M."/>
            <person name="Vergez L.M."/>
            <person name="Land M.L."/>
            <person name="Motin V.L."/>
            <person name="Brubaker R.R."/>
            <person name="Fowler J."/>
            <person name="Hinnebusch J."/>
            <person name="Marceau M."/>
            <person name="Medigue C."/>
            <person name="Simonet M."/>
            <person name="Chenal-Francisque V."/>
            <person name="Souza B."/>
            <person name="Dacheux D."/>
            <person name="Elliott J.M."/>
            <person name="Derbise A."/>
            <person name="Hauser L.J."/>
            <person name="Garcia E."/>
        </authorList>
    </citation>
    <scope>NUCLEOTIDE SEQUENCE [LARGE SCALE GENOMIC DNA]</scope>
    <source>
        <strain>IP32953</strain>
        <plasmid>pYV</plasmid>
    </source>
</reference>
<comment type="similarity">
    <text evidence="1">Belongs to the transposase 8 family.</text>
</comment>
<sequence length="88" mass="10338">MKKARFTETQILRVLKEVEGGRHVKDVCRENGGSEASYYNWKSKYGGMESSDIKRMKEREEENRRLKQMYASLSLDHEILKDVVAKKL</sequence>
<keyword id="KW-0614">Plasmid</keyword>
<dbReference type="EMBL" id="M83986">
    <property type="protein sequence ID" value="AAA27655.1"/>
    <property type="molecule type" value="Genomic_DNA"/>
</dbReference>
<dbReference type="EMBL" id="BX936399">
    <property type="protein sequence ID" value="CAF25433.1"/>
    <property type="molecule type" value="Genomic_DNA"/>
</dbReference>
<dbReference type="SMR" id="P69962"/>
<dbReference type="KEGG" id="ypo:BZ17_4245"/>
<dbReference type="KEGG" id="yps:pYV0090"/>
<dbReference type="PATRIC" id="fig|273123.14.peg.4480"/>
<dbReference type="Proteomes" id="UP000001011">
    <property type="component" value="Plasmid pYV"/>
</dbReference>
<dbReference type="GO" id="GO:0003677">
    <property type="term" value="F:DNA binding"/>
    <property type="evidence" value="ECO:0007669"/>
    <property type="project" value="InterPro"/>
</dbReference>
<dbReference type="GO" id="GO:0004803">
    <property type="term" value="F:transposase activity"/>
    <property type="evidence" value="ECO:0007669"/>
    <property type="project" value="InterPro"/>
</dbReference>
<dbReference type="GO" id="GO:0006313">
    <property type="term" value="P:DNA transposition"/>
    <property type="evidence" value="ECO:0007669"/>
    <property type="project" value="InterPro"/>
</dbReference>
<dbReference type="InterPro" id="IPR009057">
    <property type="entry name" value="Homeodomain-like_sf"/>
</dbReference>
<dbReference type="InterPro" id="IPR002514">
    <property type="entry name" value="Transposase_8"/>
</dbReference>
<dbReference type="InterPro" id="IPR052546">
    <property type="entry name" value="Transposase_8_domain"/>
</dbReference>
<dbReference type="PANTHER" id="PTHR33609">
    <property type="entry name" value="LOW CALCIUM RESPONSE LOCUS PROTEIN S"/>
    <property type="match status" value="1"/>
</dbReference>
<dbReference type="PANTHER" id="PTHR33609:SF5">
    <property type="entry name" value="LOW CALCIUM RESPONSE LOCUS PROTEIN S"/>
    <property type="match status" value="1"/>
</dbReference>
<dbReference type="Pfam" id="PF01527">
    <property type="entry name" value="HTH_Tnp_1"/>
    <property type="match status" value="1"/>
</dbReference>
<dbReference type="SUPFAM" id="SSF46689">
    <property type="entry name" value="Homeodomain-like"/>
    <property type="match status" value="1"/>
</dbReference>
<accession>P69962</accession>
<accession>Q00931</accession>
<accession>Q663H6</accession>
<name>LCRS_YERPS</name>
<organism>
    <name type="scientific">Yersinia pseudotuberculosis serotype I (strain IP32953)</name>
    <dbReference type="NCBI Taxonomy" id="273123"/>
    <lineage>
        <taxon>Bacteria</taxon>
        <taxon>Pseudomonadati</taxon>
        <taxon>Pseudomonadota</taxon>
        <taxon>Gammaproteobacteria</taxon>
        <taxon>Enterobacterales</taxon>
        <taxon>Yersiniaceae</taxon>
        <taxon>Yersinia</taxon>
    </lineage>
</organism>
<proteinExistence type="inferred from homology"/>
<feature type="chain" id="PRO_0000084377" description="Low calcium response locus protein S">
    <location>
        <begin position="1"/>
        <end position="88"/>
    </location>
</feature>
<protein>
    <recommendedName>
        <fullName>Low calcium response locus protein S</fullName>
    </recommendedName>
</protein>
<geneLocation type="plasmid">
    <name>pIB1</name>
</geneLocation>
<geneLocation type="plasmid">
    <name>pYV</name>
</geneLocation>
<gene>
    <name type="primary">lcrS</name>
    <name type="ordered locus">pYV0090</name>
</gene>
<evidence type="ECO:0000305" key="1"/>